<reference key="1">
    <citation type="journal article" date="1987" name="Mol. Gen. Genet.">
        <title>The ribosomal protein gene cluster of Mycoplasma capricolum.</title>
        <authorList>
            <person name="Ohkubo S."/>
            <person name="Muto A."/>
            <person name="Kawauchi Y."/>
            <person name="Yamao F."/>
            <person name="Osawa S."/>
        </authorList>
    </citation>
    <scope>NUCLEOTIDE SEQUENCE [GENOMIC DNA]</scope>
</reference>
<reference key="2">
    <citation type="submission" date="2005-09" db="EMBL/GenBank/DDBJ databases">
        <authorList>
            <person name="Glass J.I."/>
            <person name="Lartigue C."/>
            <person name="Pfannkoch C."/>
            <person name="Baden-Tillson H."/>
            <person name="Smith H.O."/>
            <person name="Venter J.C."/>
            <person name="Roske K."/>
            <person name="Wise K.S."/>
            <person name="Calcutt M.J."/>
            <person name="Nelson W.C."/>
            <person name="Nierman W.C."/>
        </authorList>
    </citation>
    <scope>NUCLEOTIDE SEQUENCE [LARGE SCALE GENOMIC DNA]</scope>
    <source>
        <strain>California kid / ATCC 27343 / NCTC 10154</strain>
    </source>
</reference>
<proteinExistence type="inferred from homology"/>
<organism>
    <name type="scientific">Mycoplasma capricolum subsp. capricolum (strain California kid / ATCC 27343 / NCTC 10154)</name>
    <dbReference type="NCBI Taxonomy" id="340047"/>
    <lineage>
        <taxon>Bacteria</taxon>
        <taxon>Bacillati</taxon>
        <taxon>Mycoplasmatota</taxon>
        <taxon>Mollicutes</taxon>
        <taxon>Mycoplasmataceae</taxon>
        <taxon>Mycoplasma</taxon>
    </lineage>
</organism>
<gene>
    <name evidence="1" type="primary">rplO</name>
    <name type="ordered locus">MCAP_0678</name>
</gene>
<keyword id="KW-0687">Ribonucleoprotein</keyword>
<keyword id="KW-0689">Ribosomal protein</keyword>
<keyword id="KW-0694">RNA-binding</keyword>
<keyword id="KW-0699">rRNA-binding</keyword>
<dbReference type="EMBL" id="X06414">
    <property type="protein sequence ID" value="CAA29722.1"/>
    <property type="molecule type" value="Genomic_DNA"/>
</dbReference>
<dbReference type="EMBL" id="CP000123">
    <property type="protein sequence ID" value="ABC01617.1"/>
    <property type="molecule type" value="Genomic_DNA"/>
</dbReference>
<dbReference type="PIR" id="S02849">
    <property type="entry name" value="R5YM15"/>
</dbReference>
<dbReference type="RefSeq" id="WP_011387533.1">
    <property type="nucleotide sequence ID" value="NC_007633.1"/>
</dbReference>
<dbReference type="SMR" id="P10138"/>
<dbReference type="GeneID" id="23778368"/>
<dbReference type="KEGG" id="mcp:MCAP_0678"/>
<dbReference type="HOGENOM" id="CLU_055188_4_2_14"/>
<dbReference type="PhylomeDB" id="P10138"/>
<dbReference type="Proteomes" id="UP000001928">
    <property type="component" value="Chromosome"/>
</dbReference>
<dbReference type="GO" id="GO:0022625">
    <property type="term" value="C:cytosolic large ribosomal subunit"/>
    <property type="evidence" value="ECO:0007669"/>
    <property type="project" value="TreeGrafter"/>
</dbReference>
<dbReference type="GO" id="GO:0019843">
    <property type="term" value="F:rRNA binding"/>
    <property type="evidence" value="ECO:0007669"/>
    <property type="project" value="UniProtKB-UniRule"/>
</dbReference>
<dbReference type="GO" id="GO:0003735">
    <property type="term" value="F:structural constituent of ribosome"/>
    <property type="evidence" value="ECO:0007669"/>
    <property type="project" value="InterPro"/>
</dbReference>
<dbReference type="GO" id="GO:0006412">
    <property type="term" value="P:translation"/>
    <property type="evidence" value="ECO:0007669"/>
    <property type="project" value="UniProtKB-UniRule"/>
</dbReference>
<dbReference type="Gene3D" id="3.100.10.10">
    <property type="match status" value="1"/>
</dbReference>
<dbReference type="HAMAP" id="MF_01341">
    <property type="entry name" value="Ribosomal_uL15"/>
    <property type="match status" value="1"/>
</dbReference>
<dbReference type="InterPro" id="IPR030878">
    <property type="entry name" value="Ribosomal_uL15"/>
</dbReference>
<dbReference type="InterPro" id="IPR021131">
    <property type="entry name" value="Ribosomal_uL15/eL18"/>
</dbReference>
<dbReference type="InterPro" id="IPR036227">
    <property type="entry name" value="Ribosomal_uL15/eL18_sf"/>
</dbReference>
<dbReference type="InterPro" id="IPR005749">
    <property type="entry name" value="Ribosomal_uL15_bac-type"/>
</dbReference>
<dbReference type="InterPro" id="IPR001196">
    <property type="entry name" value="Ribosomal_uL15_CS"/>
</dbReference>
<dbReference type="NCBIfam" id="TIGR01071">
    <property type="entry name" value="rplO_bact"/>
    <property type="match status" value="1"/>
</dbReference>
<dbReference type="PANTHER" id="PTHR12934">
    <property type="entry name" value="50S RIBOSOMAL PROTEIN L15"/>
    <property type="match status" value="1"/>
</dbReference>
<dbReference type="PANTHER" id="PTHR12934:SF11">
    <property type="entry name" value="LARGE RIBOSOMAL SUBUNIT PROTEIN UL15M"/>
    <property type="match status" value="1"/>
</dbReference>
<dbReference type="Pfam" id="PF00828">
    <property type="entry name" value="Ribosomal_L27A"/>
    <property type="match status" value="1"/>
</dbReference>
<dbReference type="SUPFAM" id="SSF52080">
    <property type="entry name" value="Ribosomal proteins L15p and L18e"/>
    <property type="match status" value="1"/>
</dbReference>
<dbReference type="PROSITE" id="PS00475">
    <property type="entry name" value="RIBOSOMAL_L15"/>
    <property type="match status" value="1"/>
</dbReference>
<evidence type="ECO:0000255" key="1">
    <source>
        <dbReference type="HAMAP-Rule" id="MF_01341"/>
    </source>
</evidence>
<evidence type="ECO:0000256" key="2">
    <source>
        <dbReference type="SAM" id="MobiDB-lite"/>
    </source>
</evidence>
<evidence type="ECO:0000305" key="3"/>
<comment type="function">
    <text evidence="1">Binds to the 23S rRNA.</text>
</comment>
<comment type="subunit">
    <text evidence="1">Part of the 50S ribosomal subunit.</text>
</comment>
<comment type="similarity">
    <text evidence="1">Belongs to the universal ribosomal protein uL15 family.</text>
</comment>
<protein>
    <recommendedName>
        <fullName evidence="1">Large ribosomal subunit protein uL15</fullName>
    </recommendedName>
    <alternativeName>
        <fullName evidence="3">50S ribosomal protein L15</fullName>
    </alternativeName>
</protein>
<name>RL15_MYCCT</name>
<accession>P10138</accession>
<accession>Q2SRH1</accession>
<feature type="chain" id="PRO_0000104756" description="Large ribosomal subunit protein uL15">
    <location>
        <begin position="1"/>
        <end position="145"/>
    </location>
</feature>
<feature type="region of interest" description="Disordered" evidence="2">
    <location>
        <begin position="1"/>
        <end position="54"/>
    </location>
</feature>
<feature type="compositionally biased region" description="Gly residues" evidence="2">
    <location>
        <begin position="42"/>
        <end position="52"/>
    </location>
</feature>
<sequence length="145" mass="15608">MKLNELKYTPGSKKEATRVGRGMASGKGKTATRGHKGQNSRSGGGVRPGFEGGQTPLFRRLPKVGFTSLNQKQYTILNLSDLETLGLEVINHESLIDHKIIKNSSVLVKILANGTLTKKVDVKVNKISKAAKSAIEKLGGKVEVI</sequence>